<protein>
    <recommendedName>
        <fullName evidence="1">DNA-directed RNA polymerase subunit beta</fullName>
        <shortName evidence="1">RNAP subunit beta</shortName>
        <ecNumber evidence="1">2.7.7.6</ecNumber>
    </recommendedName>
    <alternativeName>
        <fullName evidence="1">RNA polymerase subunit beta</fullName>
    </alternativeName>
    <alternativeName>
        <fullName evidence="1">Transcriptase subunit beta</fullName>
    </alternativeName>
</protein>
<accession>Q98N66</accession>
<dbReference type="EC" id="2.7.7.6" evidence="1"/>
<dbReference type="EMBL" id="BA000012">
    <property type="protein sequence ID" value="BAB47896.1"/>
    <property type="molecule type" value="Genomic_DNA"/>
</dbReference>
<dbReference type="RefSeq" id="WP_010909266.1">
    <property type="nucleotide sequence ID" value="NC_002678.2"/>
</dbReference>
<dbReference type="SMR" id="Q98N66"/>
<dbReference type="GeneID" id="66684227"/>
<dbReference type="KEGG" id="mlo:mlr0276"/>
<dbReference type="eggNOG" id="COG0085">
    <property type="taxonomic scope" value="Bacteria"/>
</dbReference>
<dbReference type="HOGENOM" id="CLU_000524_4_0_5"/>
<dbReference type="Proteomes" id="UP000000552">
    <property type="component" value="Chromosome"/>
</dbReference>
<dbReference type="GO" id="GO:0000428">
    <property type="term" value="C:DNA-directed RNA polymerase complex"/>
    <property type="evidence" value="ECO:0007669"/>
    <property type="project" value="UniProtKB-KW"/>
</dbReference>
<dbReference type="GO" id="GO:0003677">
    <property type="term" value="F:DNA binding"/>
    <property type="evidence" value="ECO:0007669"/>
    <property type="project" value="UniProtKB-UniRule"/>
</dbReference>
<dbReference type="GO" id="GO:0003899">
    <property type="term" value="F:DNA-directed RNA polymerase activity"/>
    <property type="evidence" value="ECO:0007669"/>
    <property type="project" value="UniProtKB-UniRule"/>
</dbReference>
<dbReference type="GO" id="GO:0032549">
    <property type="term" value="F:ribonucleoside binding"/>
    <property type="evidence" value="ECO:0007669"/>
    <property type="project" value="InterPro"/>
</dbReference>
<dbReference type="GO" id="GO:0006351">
    <property type="term" value="P:DNA-templated transcription"/>
    <property type="evidence" value="ECO:0007669"/>
    <property type="project" value="UniProtKB-UniRule"/>
</dbReference>
<dbReference type="CDD" id="cd00653">
    <property type="entry name" value="RNA_pol_B_RPB2"/>
    <property type="match status" value="1"/>
</dbReference>
<dbReference type="FunFam" id="2.40.50.100:FF:000006">
    <property type="entry name" value="DNA-directed RNA polymerase subunit beta"/>
    <property type="match status" value="1"/>
</dbReference>
<dbReference type="FunFam" id="3.90.1800.10:FF:000001">
    <property type="entry name" value="DNA-directed RNA polymerase subunit beta"/>
    <property type="match status" value="1"/>
</dbReference>
<dbReference type="Gene3D" id="2.40.50.100">
    <property type="match status" value="1"/>
</dbReference>
<dbReference type="Gene3D" id="2.40.50.150">
    <property type="match status" value="1"/>
</dbReference>
<dbReference type="Gene3D" id="3.90.1100.10">
    <property type="match status" value="2"/>
</dbReference>
<dbReference type="Gene3D" id="2.30.150.10">
    <property type="entry name" value="DNA-directed RNA polymerase, beta subunit, external 1 domain"/>
    <property type="match status" value="1"/>
</dbReference>
<dbReference type="Gene3D" id="2.40.270.10">
    <property type="entry name" value="DNA-directed RNA polymerase, subunit 2, domain 6"/>
    <property type="match status" value="2"/>
</dbReference>
<dbReference type="Gene3D" id="3.90.1800.10">
    <property type="entry name" value="RNA polymerase alpha subunit dimerisation domain"/>
    <property type="match status" value="1"/>
</dbReference>
<dbReference type="Gene3D" id="3.90.1110.10">
    <property type="entry name" value="RNA polymerase Rpb2, domain 2"/>
    <property type="match status" value="2"/>
</dbReference>
<dbReference type="HAMAP" id="MF_01321">
    <property type="entry name" value="RNApol_bact_RpoB"/>
    <property type="match status" value="1"/>
</dbReference>
<dbReference type="InterPro" id="IPR042107">
    <property type="entry name" value="DNA-dir_RNA_pol_bsu_ext_1_sf"/>
</dbReference>
<dbReference type="InterPro" id="IPR019462">
    <property type="entry name" value="DNA-dir_RNA_pol_bsu_external_1"/>
</dbReference>
<dbReference type="InterPro" id="IPR015712">
    <property type="entry name" value="DNA-dir_RNA_pol_su2"/>
</dbReference>
<dbReference type="InterPro" id="IPR007120">
    <property type="entry name" value="DNA-dir_RNAP_su2_dom"/>
</dbReference>
<dbReference type="InterPro" id="IPR037033">
    <property type="entry name" value="DNA-dir_RNAP_su2_hyb_sf"/>
</dbReference>
<dbReference type="InterPro" id="IPR010243">
    <property type="entry name" value="RNA_pol_bsu_bac"/>
</dbReference>
<dbReference type="InterPro" id="IPR007121">
    <property type="entry name" value="RNA_pol_bsu_CS"/>
</dbReference>
<dbReference type="InterPro" id="IPR007644">
    <property type="entry name" value="RNA_pol_bsu_protrusion"/>
</dbReference>
<dbReference type="InterPro" id="IPR007642">
    <property type="entry name" value="RNA_pol_Rpb2_2"/>
</dbReference>
<dbReference type="InterPro" id="IPR037034">
    <property type="entry name" value="RNA_pol_Rpb2_2_sf"/>
</dbReference>
<dbReference type="InterPro" id="IPR007645">
    <property type="entry name" value="RNA_pol_Rpb2_3"/>
</dbReference>
<dbReference type="InterPro" id="IPR007641">
    <property type="entry name" value="RNA_pol_Rpb2_7"/>
</dbReference>
<dbReference type="InterPro" id="IPR014724">
    <property type="entry name" value="RNA_pol_RPB2_OB-fold"/>
</dbReference>
<dbReference type="NCBIfam" id="NF001616">
    <property type="entry name" value="PRK00405.1"/>
    <property type="match status" value="1"/>
</dbReference>
<dbReference type="NCBIfam" id="TIGR02013">
    <property type="entry name" value="rpoB"/>
    <property type="match status" value="1"/>
</dbReference>
<dbReference type="PANTHER" id="PTHR20856">
    <property type="entry name" value="DNA-DIRECTED RNA POLYMERASE I SUBUNIT 2"/>
    <property type="match status" value="1"/>
</dbReference>
<dbReference type="Pfam" id="PF04563">
    <property type="entry name" value="RNA_pol_Rpb2_1"/>
    <property type="match status" value="1"/>
</dbReference>
<dbReference type="Pfam" id="PF04561">
    <property type="entry name" value="RNA_pol_Rpb2_2"/>
    <property type="match status" value="2"/>
</dbReference>
<dbReference type="Pfam" id="PF04565">
    <property type="entry name" value="RNA_pol_Rpb2_3"/>
    <property type="match status" value="1"/>
</dbReference>
<dbReference type="Pfam" id="PF10385">
    <property type="entry name" value="RNA_pol_Rpb2_45"/>
    <property type="match status" value="1"/>
</dbReference>
<dbReference type="Pfam" id="PF00562">
    <property type="entry name" value="RNA_pol_Rpb2_6"/>
    <property type="match status" value="1"/>
</dbReference>
<dbReference type="Pfam" id="PF04560">
    <property type="entry name" value="RNA_pol_Rpb2_7"/>
    <property type="match status" value="1"/>
</dbReference>
<dbReference type="SUPFAM" id="SSF64484">
    <property type="entry name" value="beta and beta-prime subunits of DNA dependent RNA-polymerase"/>
    <property type="match status" value="1"/>
</dbReference>
<dbReference type="PROSITE" id="PS01166">
    <property type="entry name" value="RNA_POL_BETA"/>
    <property type="match status" value="1"/>
</dbReference>
<organism>
    <name type="scientific">Mesorhizobium japonicum (strain LMG 29417 / CECT 9101 / MAFF 303099)</name>
    <name type="common">Mesorhizobium loti (strain MAFF 303099)</name>
    <dbReference type="NCBI Taxonomy" id="266835"/>
    <lineage>
        <taxon>Bacteria</taxon>
        <taxon>Pseudomonadati</taxon>
        <taxon>Pseudomonadota</taxon>
        <taxon>Alphaproteobacteria</taxon>
        <taxon>Hyphomicrobiales</taxon>
        <taxon>Phyllobacteriaceae</taxon>
        <taxon>Mesorhizobium</taxon>
    </lineage>
</organism>
<reference key="1">
    <citation type="journal article" date="2000" name="DNA Res.">
        <title>Complete genome structure of the nitrogen-fixing symbiotic bacterium Mesorhizobium loti.</title>
        <authorList>
            <person name="Kaneko T."/>
            <person name="Nakamura Y."/>
            <person name="Sato S."/>
            <person name="Asamizu E."/>
            <person name="Kato T."/>
            <person name="Sasamoto S."/>
            <person name="Watanabe A."/>
            <person name="Idesawa K."/>
            <person name="Ishikawa A."/>
            <person name="Kawashima K."/>
            <person name="Kimura T."/>
            <person name="Kishida Y."/>
            <person name="Kiyokawa C."/>
            <person name="Kohara M."/>
            <person name="Matsumoto M."/>
            <person name="Matsuno A."/>
            <person name="Mochizuki Y."/>
            <person name="Nakayama S."/>
            <person name="Nakazaki N."/>
            <person name="Shimpo S."/>
            <person name="Sugimoto M."/>
            <person name="Takeuchi C."/>
            <person name="Yamada M."/>
            <person name="Tabata S."/>
        </authorList>
    </citation>
    <scope>NUCLEOTIDE SEQUENCE [LARGE SCALE GENOMIC DNA]</scope>
    <source>
        <strain>LMG 29417 / CECT 9101 / MAFF 303099</strain>
    </source>
</reference>
<sequence length="1378" mass="153901">MAQTQTFNGRRRVRKFFGKIPEVAEMPNLIEVQKASYDQFLMVDEPKGGRPDEGLQAVFKSVFPISDFSGSSMLEFVKYEFEGPKFDVDECRQRDLTYAAPLKVTLRLIVFDIDEDTGAKSIKDIKEQDVYMGDMPLMTLNGTFIVNGTERVIVSQMHRSPGVFFDHDKGKSHSSGKLLFAARVIPYRGSWLDIEFDSKDVVHARIDRRRKIPVTSLLMALGMDGEEILSTFYNKITYVRAGDHWRIPFNVERFRGLKAVGDLVDADTGEIVVEAGKKITARQARQLGEKGLKAIKATDEDLLGNYLAEDIVNYATGEIFLEAGDEIDEKTLKVLLGTGEQEIKVLDIDHVNVGAYIRNTLNVDKNESRQDALFDIYRVMRPGEPPTLETAEAMFNSLFFDSERYDLSAVGRVKMNMRLELKAEDTVRVLRKEDILAVVKTLVELRDGKGEIDDIDNLGNRRVRSVGELMENQYRVGLLRMERAIKERMSSIEIDTVMPQDLINAKPAAAAVREFFGSSQLSQFMDQTNPLSEITHKRRLSALGPGGLTRERAGFEVRDVHPTHYGRICPIETPEGPNIGLINSLATFARVNKYGFIESPYRKIVDGKLTNDVVYLSAMEEAKHHVAQANAELDKNGGFVDEFVICRSAGEVMMAPRENVDLMDVSPKQMVSVAAALIPFLENDDANRALMGSNMQRQAVPLVRAEAPFVGTGMEPIVARDSGAAIGARRGGIVDQVDATRIVIRATEDLDPGKSGVDIYRLMKFQRSNQNTCINQRPLVRMGDRVNKGDIIADGPSTELGDLALGRNVLVAFMPWNGYNYEDSILLSERIVADDVFTSIHIEEFEVMARDTKLGPEEITRDIPNVSEEALKNLDEAGIVYIGAEVQPGDILVGKITPKGESPMTPEEKLLRAIFGEKASDVRDTSMRMPPGTFGTVVEVRVFNRHGVEKDERAMAIEREEIERLAKDRDDEQAILDRNVYARLSDVLVGKEAIAGPKGFKKGSTLSKDTLDEYPRSQWWQFAVENEKLQSELEALRGQYDDSKKALEQRFMDKVEKVQRGDEMPPGVMKMVKVFVAVKRKMQPGDKMAGRHGNKGVVSRIVPVEDMPFLEDGTHADIVLNPLGVPSRMNVGQILETHLGWACAGMGKKIGELIDTYKAAGDIKPLRKTLESFMPANDRNEPIREYDDESIVRLSEQMRRGVSIATPVFDGAHEADINIMLEQAGLHTSGQSQLYDGRTGEPFDRKVTMGYIYMLKLHHLVDDKIHARSIGPYSLVTQQPLGGKAQFGGQRFGEMEVWALEAYGAAYTLQEMLTVKSDDVAGRTKVYEAIVRGDDTFEAGIPESFNVLVKEMRSLGLNVELENTKLDDAPVRLPDAAE</sequence>
<feature type="chain" id="PRO_0000047945" description="DNA-directed RNA polymerase subunit beta">
    <location>
        <begin position="1"/>
        <end position="1378"/>
    </location>
</feature>
<gene>
    <name evidence="1" type="primary">rpoB</name>
    <name type="ordered locus">mlr0276</name>
</gene>
<comment type="function">
    <text evidence="1">DNA-dependent RNA polymerase catalyzes the transcription of DNA into RNA using the four ribonucleoside triphosphates as substrates.</text>
</comment>
<comment type="catalytic activity">
    <reaction evidence="1">
        <text>RNA(n) + a ribonucleoside 5'-triphosphate = RNA(n+1) + diphosphate</text>
        <dbReference type="Rhea" id="RHEA:21248"/>
        <dbReference type="Rhea" id="RHEA-COMP:14527"/>
        <dbReference type="Rhea" id="RHEA-COMP:17342"/>
        <dbReference type="ChEBI" id="CHEBI:33019"/>
        <dbReference type="ChEBI" id="CHEBI:61557"/>
        <dbReference type="ChEBI" id="CHEBI:140395"/>
        <dbReference type="EC" id="2.7.7.6"/>
    </reaction>
</comment>
<comment type="subunit">
    <text evidence="1">The RNAP catalytic core consists of 2 alpha, 1 beta, 1 beta' and 1 omega subunit. When a sigma factor is associated with the core the holoenzyme is formed, which can initiate transcription.</text>
</comment>
<comment type="similarity">
    <text evidence="1">Belongs to the RNA polymerase beta chain family.</text>
</comment>
<keyword id="KW-0240">DNA-directed RNA polymerase</keyword>
<keyword id="KW-0548">Nucleotidyltransferase</keyword>
<keyword id="KW-0804">Transcription</keyword>
<keyword id="KW-0808">Transferase</keyword>
<proteinExistence type="inferred from homology"/>
<evidence type="ECO:0000255" key="1">
    <source>
        <dbReference type="HAMAP-Rule" id="MF_01321"/>
    </source>
</evidence>
<name>RPOB_RHILO</name>